<protein>
    <recommendedName>
        <fullName evidence="1">Multidrug resistance protein MdtG</fullName>
    </recommendedName>
</protein>
<keyword id="KW-0997">Cell inner membrane</keyword>
<keyword id="KW-1003">Cell membrane</keyword>
<keyword id="KW-0472">Membrane</keyword>
<keyword id="KW-0812">Transmembrane</keyword>
<keyword id="KW-1133">Transmembrane helix</keyword>
<keyword id="KW-0813">Transport</keyword>
<proteinExistence type="inferred from homology"/>
<accession>B5FL11</accession>
<reference key="1">
    <citation type="journal article" date="2011" name="J. Bacteriol.">
        <title>Comparative genomics of 28 Salmonella enterica isolates: evidence for CRISPR-mediated adaptive sublineage evolution.</title>
        <authorList>
            <person name="Fricke W.F."/>
            <person name="Mammel M.K."/>
            <person name="McDermott P.F."/>
            <person name="Tartera C."/>
            <person name="White D.G."/>
            <person name="Leclerc J.E."/>
            <person name="Ravel J."/>
            <person name="Cebula T.A."/>
        </authorList>
    </citation>
    <scope>NUCLEOTIDE SEQUENCE [LARGE SCALE GENOMIC DNA]</scope>
    <source>
        <strain>CT_02021853</strain>
    </source>
</reference>
<feature type="chain" id="PRO_1000200788" description="Multidrug resistance protein MdtG">
    <location>
        <begin position="1"/>
        <end position="404"/>
    </location>
</feature>
<feature type="transmembrane region" description="Helical" evidence="1">
    <location>
        <begin position="19"/>
        <end position="39"/>
    </location>
</feature>
<feature type="transmembrane region" description="Helical" evidence="1">
    <location>
        <begin position="56"/>
        <end position="76"/>
    </location>
</feature>
<feature type="transmembrane region" description="Helical" evidence="1">
    <location>
        <begin position="90"/>
        <end position="110"/>
    </location>
</feature>
<feature type="transmembrane region" description="Helical" evidence="1">
    <location>
        <begin position="113"/>
        <end position="133"/>
    </location>
</feature>
<feature type="transmembrane region" description="Helical" evidence="1">
    <location>
        <begin position="144"/>
        <end position="164"/>
    </location>
</feature>
<feature type="transmembrane region" description="Helical" evidence="1">
    <location>
        <begin position="171"/>
        <end position="191"/>
    </location>
</feature>
<feature type="transmembrane region" description="Helical" evidence="1">
    <location>
        <begin position="222"/>
        <end position="242"/>
    </location>
</feature>
<feature type="transmembrane region" description="Helical" evidence="1">
    <location>
        <begin position="254"/>
        <end position="274"/>
    </location>
</feature>
<feature type="transmembrane region" description="Helical" evidence="1">
    <location>
        <begin position="288"/>
        <end position="308"/>
    </location>
</feature>
<feature type="transmembrane region" description="Helical" evidence="1">
    <location>
        <begin position="317"/>
        <end position="337"/>
    </location>
</feature>
<feature type="transmembrane region" description="Helical" evidence="1">
    <location>
        <begin position="376"/>
        <end position="396"/>
    </location>
</feature>
<gene>
    <name evidence="1" type="primary">mdtG</name>
    <name type="ordered locus">SeD_A2219</name>
</gene>
<comment type="subcellular location">
    <subcellularLocation>
        <location evidence="1">Cell inner membrane</location>
        <topology evidence="1">Multi-pass membrane protein</topology>
    </subcellularLocation>
</comment>
<comment type="similarity">
    <text evidence="1">Belongs to the major facilitator superfamily. DHA1 family. MdtG (TC 2.A.1.2.20) subfamily.</text>
</comment>
<name>MDTG_SALDC</name>
<evidence type="ECO:0000255" key="1">
    <source>
        <dbReference type="HAMAP-Rule" id="MF_01528"/>
    </source>
</evidence>
<dbReference type="EMBL" id="CP001144">
    <property type="protein sequence ID" value="ACH77992.1"/>
    <property type="molecule type" value="Genomic_DNA"/>
</dbReference>
<dbReference type="RefSeq" id="WP_000075044.1">
    <property type="nucleotide sequence ID" value="NC_011205.1"/>
</dbReference>
<dbReference type="SMR" id="B5FL11"/>
<dbReference type="KEGG" id="sed:SeD_A2219"/>
<dbReference type="HOGENOM" id="CLU_001265_57_3_6"/>
<dbReference type="Proteomes" id="UP000008322">
    <property type="component" value="Chromosome"/>
</dbReference>
<dbReference type="GO" id="GO:0005886">
    <property type="term" value="C:plasma membrane"/>
    <property type="evidence" value="ECO:0007669"/>
    <property type="project" value="UniProtKB-SubCell"/>
</dbReference>
<dbReference type="GO" id="GO:0022857">
    <property type="term" value="F:transmembrane transporter activity"/>
    <property type="evidence" value="ECO:0007669"/>
    <property type="project" value="UniProtKB-UniRule"/>
</dbReference>
<dbReference type="CDD" id="cd17391">
    <property type="entry name" value="MFS_MdtG_MDR_like"/>
    <property type="match status" value="1"/>
</dbReference>
<dbReference type="FunFam" id="1.20.1250.20:FF:000020">
    <property type="entry name" value="Multidrug resistance protein MdtG"/>
    <property type="match status" value="1"/>
</dbReference>
<dbReference type="FunFam" id="1.20.1250.20:FF:000022">
    <property type="entry name" value="Multidrug resistance protein MdtG"/>
    <property type="match status" value="1"/>
</dbReference>
<dbReference type="Gene3D" id="1.20.1250.20">
    <property type="entry name" value="MFS general substrate transporter like domains"/>
    <property type="match status" value="2"/>
</dbReference>
<dbReference type="HAMAP" id="MF_01528">
    <property type="entry name" value="MFS_MdtG"/>
    <property type="match status" value="1"/>
</dbReference>
<dbReference type="InterPro" id="IPR011701">
    <property type="entry name" value="MFS"/>
</dbReference>
<dbReference type="InterPro" id="IPR020846">
    <property type="entry name" value="MFS_dom"/>
</dbReference>
<dbReference type="InterPro" id="IPR050497">
    <property type="entry name" value="MFS_MdtG_subfamily"/>
</dbReference>
<dbReference type="InterPro" id="IPR005828">
    <property type="entry name" value="MFS_sugar_transport-like"/>
</dbReference>
<dbReference type="InterPro" id="IPR036259">
    <property type="entry name" value="MFS_trans_sf"/>
</dbReference>
<dbReference type="InterPro" id="IPR023692">
    <property type="entry name" value="Mutidrug-R_MdtG"/>
</dbReference>
<dbReference type="InterPro" id="IPR001958">
    <property type="entry name" value="Tet-R_TetA/multi-R_MdtG-like"/>
</dbReference>
<dbReference type="NCBIfam" id="NF007372">
    <property type="entry name" value="PRK09874.1"/>
    <property type="match status" value="1"/>
</dbReference>
<dbReference type="PANTHER" id="PTHR43414">
    <property type="entry name" value="MULTIDRUG RESISTANCE PROTEIN MDTG"/>
    <property type="match status" value="1"/>
</dbReference>
<dbReference type="PANTHER" id="PTHR43414:SF6">
    <property type="entry name" value="MULTIDRUG RESISTANCE PROTEIN MDTG"/>
    <property type="match status" value="1"/>
</dbReference>
<dbReference type="Pfam" id="PF07690">
    <property type="entry name" value="MFS_1"/>
    <property type="match status" value="1"/>
</dbReference>
<dbReference type="Pfam" id="PF00083">
    <property type="entry name" value="Sugar_tr"/>
    <property type="match status" value="1"/>
</dbReference>
<dbReference type="PRINTS" id="PR01035">
    <property type="entry name" value="TCRTETA"/>
</dbReference>
<dbReference type="SUPFAM" id="SSF103473">
    <property type="entry name" value="MFS general substrate transporter"/>
    <property type="match status" value="1"/>
</dbReference>
<dbReference type="PROSITE" id="PS50850">
    <property type="entry name" value="MFS"/>
    <property type="match status" value="1"/>
</dbReference>
<sequence length="404" mass="43578">MSPSDVPINWKRNLTVTWLGCFLTGAAFSLVMPFLPLYVEQLGVTGHSALNMWSGLVFSITFLFSAIASPFWGGLADRKGRKIMLLRSALGMAIVMLLMGMAQNIWQFLILRALLGLLGGFIPNANALIATQVPRHKSGWALGTLSTGGVSGALLGPLAGGLLADHYGLRPVFFITASVLFICFLLTFFFIHENFLPVSKKEMLHVREVVASLKNPRLVLSLFVTTLIIQVATGSIAPILTLYVRELAGDVSNIAFISGMIASVPGVAALLSAPRLGKLGDRIGPEKILIVALIISVLLLIPMSFVQTPWQLALLRFLLGAADGALLPAVQTLLVYNSTNQIAGRIFSYNQSFRDIGNVTGPLMGAAISASYGFRAVFCVTAGVVLFNAIYSWNSLRRRRLAIE</sequence>
<organism>
    <name type="scientific">Salmonella dublin (strain CT_02021853)</name>
    <dbReference type="NCBI Taxonomy" id="439851"/>
    <lineage>
        <taxon>Bacteria</taxon>
        <taxon>Pseudomonadati</taxon>
        <taxon>Pseudomonadota</taxon>
        <taxon>Gammaproteobacteria</taxon>
        <taxon>Enterobacterales</taxon>
        <taxon>Enterobacteriaceae</taxon>
        <taxon>Salmonella</taxon>
    </lineage>
</organism>